<feature type="chain" id="PRO_0000350242" description="Probable dual-specificity RNA methyltransferase RlmN">
    <location>
        <begin position="1"/>
        <end position="380"/>
    </location>
</feature>
<feature type="domain" description="Radical SAM core" evidence="2">
    <location>
        <begin position="129"/>
        <end position="362"/>
    </location>
</feature>
<feature type="active site" description="Proton acceptor" evidence="1">
    <location>
        <position position="123"/>
    </location>
</feature>
<feature type="active site" description="S-methylcysteine intermediate" evidence="1">
    <location>
        <position position="367"/>
    </location>
</feature>
<feature type="binding site" evidence="1">
    <location>
        <position position="143"/>
    </location>
    <ligand>
        <name>[4Fe-4S] cluster</name>
        <dbReference type="ChEBI" id="CHEBI:49883"/>
        <note>4Fe-4S-S-AdoMet</note>
    </ligand>
</feature>
<feature type="binding site" evidence="1">
    <location>
        <position position="147"/>
    </location>
    <ligand>
        <name>[4Fe-4S] cluster</name>
        <dbReference type="ChEBI" id="CHEBI:49883"/>
        <note>4Fe-4S-S-AdoMet</note>
    </ligand>
</feature>
<feature type="binding site" evidence="1">
    <location>
        <position position="150"/>
    </location>
    <ligand>
        <name>[4Fe-4S] cluster</name>
        <dbReference type="ChEBI" id="CHEBI:49883"/>
        <note>4Fe-4S-S-AdoMet</note>
    </ligand>
</feature>
<feature type="binding site" evidence="1">
    <location>
        <begin position="193"/>
        <end position="194"/>
    </location>
    <ligand>
        <name>S-adenosyl-L-methionine</name>
        <dbReference type="ChEBI" id="CHEBI:59789"/>
    </ligand>
</feature>
<feature type="binding site" evidence="1">
    <location>
        <position position="225"/>
    </location>
    <ligand>
        <name>S-adenosyl-L-methionine</name>
        <dbReference type="ChEBI" id="CHEBI:59789"/>
    </ligand>
</feature>
<feature type="binding site" evidence="1">
    <location>
        <begin position="248"/>
        <end position="250"/>
    </location>
    <ligand>
        <name>S-adenosyl-L-methionine</name>
        <dbReference type="ChEBI" id="CHEBI:59789"/>
    </ligand>
</feature>
<feature type="binding site" evidence="1">
    <location>
        <position position="324"/>
    </location>
    <ligand>
        <name>S-adenosyl-L-methionine</name>
        <dbReference type="ChEBI" id="CHEBI:59789"/>
    </ligand>
</feature>
<feature type="disulfide bond" description="(transient)" evidence="1">
    <location>
        <begin position="136"/>
        <end position="367"/>
    </location>
</feature>
<gene>
    <name evidence="1" type="primary">rlmN</name>
    <name type="ordered locus">Bsph_1491</name>
</gene>
<keyword id="KW-0004">4Fe-4S</keyword>
<keyword id="KW-0963">Cytoplasm</keyword>
<keyword id="KW-1015">Disulfide bond</keyword>
<keyword id="KW-0408">Iron</keyword>
<keyword id="KW-0411">Iron-sulfur</keyword>
<keyword id="KW-0479">Metal-binding</keyword>
<keyword id="KW-0489">Methyltransferase</keyword>
<keyword id="KW-0698">rRNA processing</keyword>
<keyword id="KW-0949">S-adenosyl-L-methionine</keyword>
<keyword id="KW-0808">Transferase</keyword>
<keyword id="KW-0819">tRNA processing</keyword>
<dbReference type="EC" id="2.1.1.192" evidence="1"/>
<dbReference type="EMBL" id="CP000817">
    <property type="protein sequence ID" value="ACA39093.1"/>
    <property type="molecule type" value="Genomic_DNA"/>
</dbReference>
<dbReference type="RefSeq" id="WP_012293210.1">
    <property type="nucleotide sequence ID" value="NC_010382.1"/>
</dbReference>
<dbReference type="SMR" id="B1HQE6"/>
<dbReference type="EnsemblBacteria" id="ACA39093">
    <property type="protein sequence ID" value="ACA39093"/>
    <property type="gene ID" value="Bsph_1491"/>
</dbReference>
<dbReference type="KEGG" id="lsp:Bsph_1491"/>
<dbReference type="HOGENOM" id="CLU_029101_0_1_9"/>
<dbReference type="Proteomes" id="UP000002164">
    <property type="component" value="Chromosome"/>
</dbReference>
<dbReference type="GO" id="GO:0005737">
    <property type="term" value="C:cytoplasm"/>
    <property type="evidence" value="ECO:0007669"/>
    <property type="project" value="UniProtKB-SubCell"/>
</dbReference>
<dbReference type="GO" id="GO:0051539">
    <property type="term" value="F:4 iron, 4 sulfur cluster binding"/>
    <property type="evidence" value="ECO:0007669"/>
    <property type="project" value="UniProtKB-UniRule"/>
</dbReference>
<dbReference type="GO" id="GO:0046872">
    <property type="term" value="F:metal ion binding"/>
    <property type="evidence" value="ECO:0007669"/>
    <property type="project" value="UniProtKB-KW"/>
</dbReference>
<dbReference type="GO" id="GO:0070040">
    <property type="term" value="F:rRNA (adenine(2503)-C2-)-methyltransferase activity"/>
    <property type="evidence" value="ECO:0007669"/>
    <property type="project" value="UniProtKB-UniRule"/>
</dbReference>
<dbReference type="GO" id="GO:0019843">
    <property type="term" value="F:rRNA binding"/>
    <property type="evidence" value="ECO:0007669"/>
    <property type="project" value="UniProtKB-UniRule"/>
</dbReference>
<dbReference type="GO" id="GO:0002935">
    <property type="term" value="F:tRNA (adenine(37)-C2)-methyltransferase activity"/>
    <property type="evidence" value="ECO:0007669"/>
    <property type="project" value="UniProtKB-UniRule"/>
</dbReference>
<dbReference type="GO" id="GO:0000049">
    <property type="term" value="F:tRNA binding"/>
    <property type="evidence" value="ECO:0007669"/>
    <property type="project" value="UniProtKB-UniRule"/>
</dbReference>
<dbReference type="GO" id="GO:0070475">
    <property type="term" value="P:rRNA base methylation"/>
    <property type="evidence" value="ECO:0007669"/>
    <property type="project" value="UniProtKB-UniRule"/>
</dbReference>
<dbReference type="GO" id="GO:0030488">
    <property type="term" value="P:tRNA methylation"/>
    <property type="evidence" value="ECO:0007669"/>
    <property type="project" value="UniProtKB-UniRule"/>
</dbReference>
<dbReference type="CDD" id="cd01335">
    <property type="entry name" value="Radical_SAM"/>
    <property type="match status" value="1"/>
</dbReference>
<dbReference type="FunFam" id="3.20.20.70:FF:000014">
    <property type="entry name" value="Probable dual-specificity RNA methyltransferase RlmN"/>
    <property type="match status" value="1"/>
</dbReference>
<dbReference type="Gene3D" id="1.10.150.530">
    <property type="match status" value="1"/>
</dbReference>
<dbReference type="Gene3D" id="3.20.20.70">
    <property type="entry name" value="Aldolase class I"/>
    <property type="match status" value="1"/>
</dbReference>
<dbReference type="HAMAP" id="MF_01849">
    <property type="entry name" value="RNA_methyltr_RlmN"/>
    <property type="match status" value="1"/>
</dbReference>
<dbReference type="InterPro" id="IPR013785">
    <property type="entry name" value="Aldolase_TIM"/>
</dbReference>
<dbReference type="InterPro" id="IPR040072">
    <property type="entry name" value="Methyltransferase_A"/>
</dbReference>
<dbReference type="InterPro" id="IPR048641">
    <property type="entry name" value="RlmN_N"/>
</dbReference>
<dbReference type="InterPro" id="IPR027492">
    <property type="entry name" value="RNA_MTrfase_RlmN"/>
</dbReference>
<dbReference type="InterPro" id="IPR004383">
    <property type="entry name" value="rRNA_lsu_MTrfase_RlmN/Cfr"/>
</dbReference>
<dbReference type="InterPro" id="IPR007197">
    <property type="entry name" value="rSAM"/>
</dbReference>
<dbReference type="NCBIfam" id="TIGR00048">
    <property type="entry name" value="rRNA_mod_RlmN"/>
    <property type="match status" value="1"/>
</dbReference>
<dbReference type="PANTHER" id="PTHR30544">
    <property type="entry name" value="23S RRNA METHYLTRANSFERASE"/>
    <property type="match status" value="1"/>
</dbReference>
<dbReference type="PANTHER" id="PTHR30544:SF5">
    <property type="entry name" value="RADICAL SAM CORE DOMAIN-CONTAINING PROTEIN"/>
    <property type="match status" value="1"/>
</dbReference>
<dbReference type="Pfam" id="PF04055">
    <property type="entry name" value="Radical_SAM"/>
    <property type="match status" value="1"/>
</dbReference>
<dbReference type="Pfam" id="PF21016">
    <property type="entry name" value="RlmN_N"/>
    <property type="match status" value="1"/>
</dbReference>
<dbReference type="PIRSF" id="PIRSF006004">
    <property type="entry name" value="CHP00048"/>
    <property type="match status" value="1"/>
</dbReference>
<dbReference type="SFLD" id="SFLDF00275">
    <property type="entry name" value="adenosine_C2_methyltransferase"/>
    <property type="match status" value="1"/>
</dbReference>
<dbReference type="SFLD" id="SFLDG01062">
    <property type="entry name" value="methyltransferase_(Class_A)"/>
    <property type="match status" value="1"/>
</dbReference>
<dbReference type="SUPFAM" id="SSF102114">
    <property type="entry name" value="Radical SAM enzymes"/>
    <property type="match status" value="1"/>
</dbReference>
<dbReference type="PROSITE" id="PS51918">
    <property type="entry name" value="RADICAL_SAM"/>
    <property type="match status" value="1"/>
</dbReference>
<sequence>MVDQKKFNERINDLVEEAEEKPVRRAKKEKPNLKESIYSFQPHQLEDWLKENGEKPFRAAQIFDWLYNKRVKTFEEMSNLSKGLRDKLAANFALSTLSTIIKQESKDGTIKFLFQLQDGYSIETVLMRHEYGNSVCVTTQVGCRIGCTFCASTLGGLKRHLLAGEIVEQVVKVQQTLDEVNERVSHIVIMGIGEPFDNYDAMMNFLKVINHEKGLNIGARHITVSTSGIVPKIYQFADEQLQINFAVSLHAPNQEARQKLMPIARAYKLDELMEAVRYYTKKTGRRVSFEYGLMSGENDSVEIAEELSALIKGIKCHVNLIPVNYVPERDYVRTSRSQIFAFEKTLKKNGINVTIRREQGSDIAAACGQLRAQERSEETR</sequence>
<comment type="function">
    <text evidence="1">Specifically methylates position 2 of adenine 2503 in 23S rRNA and position 2 of adenine 37 in tRNAs.</text>
</comment>
<comment type="catalytic activity">
    <reaction evidence="1">
        <text>adenosine(2503) in 23S rRNA + 2 reduced [2Fe-2S]-[ferredoxin] + 2 S-adenosyl-L-methionine = 2-methyladenosine(2503) in 23S rRNA + 5'-deoxyadenosine + L-methionine + 2 oxidized [2Fe-2S]-[ferredoxin] + S-adenosyl-L-homocysteine</text>
        <dbReference type="Rhea" id="RHEA:42916"/>
        <dbReference type="Rhea" id="RHEA-COMP:10000"/>
        <dbReference type="Rhea" id="RHEA-COMP:10001"/>
        <dbReference type="Rhea" id="RHEA-COMP:10152"/>
        <dbReference type="Rhea" id="RHEA-COMP:10282"/>
        <dbReference type="ChEBI" id="CHEBI:17319"/>
        <dbReference type="ChEBI" id="CHEBI:33737"/>
        <dbReference type="ChEBI" id="CHEBI:33738"/>
        <dbReference type="ChEBI" id="CHEBI:57844"/>
        <dbReference type="ChEBI" id="CHEBI:57856"/>
        <dbReference type="ChEBI" id="CHEBI:59789"/>
        <dbReference type="ChEBI" id="CHEBI:74411"/>
        <dbReference type="ChEBI" id="CHEBI:74497"/>
        <dbReference type="EC" id="2.1.1.192"/>
    </reaction>
</comment>
<comment type="catalytic activity">
    <reaction evidence="1">
        <text>adenosine(37) in tRNA + 2 reduced [2Fe-2S]-[ferredoxin] + 2 S-adenosyl-L-methionine = 2-methyladenosine(37) in tRNA + 5'-deoxyadenosine + L-methionine + 2 oxidized [2Fe-2S]-[ferredoxin] + S-adenosyl-L-homocysteine</text>
        <dbReference type="Rhea" id="RHEA:43332"/>
        <dbReference type="Rhea" id="RHEA-COMP:10000"/>
        <dbReference type="Rhea" id="RHEA-COMP:10001"/>
        <dbReference type="Rhea" id="RHEA-COMP:10162"/>
        <dbReference type="Rhea" id="RHEA-COMP:10485"/>
        <dbReference type="ChEBI" id="CHEBI:17319"/>
        <dbReference type="ChEBI" id="CHEBI:33737"/>
        <dbReference type="ChEBI" id="CHEBI:33738"/>
        <dbReference type="ChEBI" id="CHEBI:57844"/>
        <dbReference type="ChEBI" id="CHEBI:57856"/>
        <dbReference type="ChEBI" id="CHEBI:59789"/>
        <dbReference type="ChEBI" id="CHEBI:74411"/>
        <dbReference type="ChEBI" id="CHEBI:74497"/>
        <dbReference type="EC" id="2.1.1.192"/>
    </reaction>
</comment>
<comment type="cofactor">
    <cofactor evidence="1">
        <name>[4Fe-4S] cluster</name>
        <dbReference type="ChEBI" id="CHEBI:49883"/>
    </cofactor>
    <text evidence="1">Binds 1 [4Fe-4S] cluster. The cluster is coordinated with 3 cysteines and an exchangeable S-adenosyl-L-methionine.</text>
</comment>
<comment type="subcellular location">
    <subcellularLocation>
        <location evidence="1">Cytoplasm</location>
    </subcellularLocation>
</comment>
<comment type="miscellaneous">
    <text evidence="1">Reaction proceeds by a ping-pong mechanism involving intermediate methylation of a conserved cysteine residue.</text>
</comment>
<comment type="similarity">
    <text evidence="1">Belongs to the radical SAM superfamily. RlmN family.</text>
</comment>
<evidence type="ECO:0000255" key="1">
    <source>
        <dbReference type="HAMAP-Rule" id="MF_01849"/>
    </source>
</evidence>
<evidence type="ECO:0000255" key="2">
    <source>
        <dbReference type="PROSITE-ProRule" id="PRU01266"/>
    </source>
</evidence>
<accession>B1HQE6</accession>
<proteinExistence type="inferred from homology"/>
<name>RLMN_LYSSC</name>
<organism>
    <name type="scientific">Lysinibacillus sphaericus (strain C3-41)</name>
    <dbReference type="NCBI Taxonomy" id="444177"/>
    <lineage>
        <taxon>Bacteria</taxon>
        <taxon>Bacillati</taxon>
        <taxon>Bacillota</taxon>
        <taxon>Bacilli</taxon>
        <taxon>Bacillales</taxon>
        <taxon>Bacillaceae</taxon>
        <taxon>Lysinibacillus</taxon>
    </lineage>
</organism>
<protein>
    <recommendedName>
        <fullName evidence="1">Probable dual-specificity RNA methyltransferase RlmN</fullName>
        <ecNumber evidence="1">2.1.1.192</ecNumber>
    </recommendedName>
    <alternativeName>
        <fullName evidence="1">23S rRNA (adenine(2503)-C(2))-methyltransferase</fullName>
    </alternativeName>
    <alternativeName>
        <fullName evidence="1">23S rRNA m2A2503 methyltransferase</fullName>
    </alternativeName>
    <alternativeName>
        <fullName evidence="1">Ribosomal RNA large subunit methyltransferase N</fullName>
    </alternativeName>
    <alternativeName>
        <fullName evidence="1">tRNA (adenine(37)-C(2))-methyltransferase</fullName>
    </alternativeName>
    <alternativeName>
        <fullName evidence="1">tRNA m2A37 methyltransferase</fullName>
    </alternativeName>
</protein>
<reference key="1">
    <citation type="journal article" date="2008" name="J. Bacteriol.">
        <title>Complete genome sequence of the mosquitocidal bacterium Bacillus sphaericus C3-41 and comparison with those of closely related Bacillus species.</title>
        <authorList>
            <person name="Hu X."/>
            <person name="Fan W."/>
            <person name="Han B."/>
            <person name="Liu H."/>
            <person name="Zheng D."/>
            <person name="Li Q."/>
            <person name="Dong W."/>
            <person name="Yan J."/>
            <person name="Gao M."/>
            <person name="Berry C."/>
            <person name="Yuan Z."/>
        </authorList>
    </citation>
    <scope>NUCLEOTIDE SEQUENCE [LARGE SCALE GENOMIC DNA]</scope>
    <source>
        <strain>C3-41</strain>
    </source>
</reference>